<feature type="chain" id="PRO_0000156608" description="Homoserine kinase">
    <location>
        <begin position="1"/>
        <end position="304"/>
    </location>
</feature>
<feature type="binding site" evidence="1">
    <location>
        <begin position="90"/>
        <end position="100"/>
    </location>
    <ligand>
        <name>ATP</name>
        <dbReference type="ChEBI" id="CHEBI:30616"/>
    </ligand>
</feature>
<keyword id="KW-0028">Amino-acid biosynthesis</keyword>
<keyword id="KW-0067">ATP-binding</keyword>
<keyword id="KW-0963">Cytoplasm</keyword>
<keyword id="KW-0418">Kinase</keyword>
<keyword id="KW-0547">Nucleotide-binding</keyword>
<keyword id="KW-0791">Threonine biosynthesis</keyword>
<keyword id="KW-0808">Transferase</keyword>
<organism>
    <name type="scientific">Staphylococcus aureus (strain MSSA476)</name>
    <dbReference type="NCBI Taxonomy" id="282459"/>
    <lineage>
        <taxon>Bacteria</taxon>
        <taxon>Bacillati</taxon>
        <taxon>Bacillota</taxon>
        <taxon>Bacilli</taxon>
        <taxon>Bacillales</taxon>
        <taxon>Staphylococcaceae</taxon>
        <taxon>Staphylococcus</taxon>
    </lineage>
</organism>
<sequence length="304" mass="33293">MSNVLELTIPASTANLGVGFDSIGMALDKFLHLSVKETSGTKWEYIFHDDASKQLPTDETNFIYHVAQQVASKYSVDLPNLCIEMRSDIPLARGLGSSASALVGAIYIANYFGDIQLSKHEVLQLATEIEGHPDNVAPTIYGGLIAGYYNDVSKETSVAHIDIPDVDVIVTIPTYELKTEASRRALPQKLTHSEAVKSSAISNTMICALAQHNYELAGKLMQQDGFHEPYRQHLIAEFDEVKTIAIQHNAYATVISGAGPTILIFSRKENSGELVRSLNSQVVSCHSELVDINISGVKERIVYQ</sequence>
<proteinExistence type="inferred from homology"/>
<name>KHSE_STAAS</name>
<accession>Q6G9M8</accession>
<gene>
    <name evidence="1" type="primary">thrB</name>
    <name type="ordered locus">SAS1270</name>
</gene>
<reference key="1">
    <citation type="journal article" date="2004" name="Proc. Natl. Acad. Sci. U.S.A.">
        <title>Complete genomes of two clinical Staphylococcus aureus strains: evidence for the rapid evolution of virulence and drug resistance.</title>
        <authorList>
            <person name="Holden M.T.G."/>
            <person name="Feil E.J."/>
            <person name="Lindsay J.A."/>
            <person name="Peacock S.J."/>
            <person name="Day N.P.J."/>
            <person name="Enright M.C."/>
            <person name="Foster T.J."/>
            <person name="Moore C.E."/>
            <person name="Hurst L."/>
            <person name="Atkin R."/>
            <person name="Barron A."/>
            <person name="Bason N."/>
            <person name="Bentley S.D."/>
            <person name="Chillingworth C."/>
            <person name="Chillingworth T."/>
            <person name="Churcher C."/>
            <person name="Clark L."/>
            <person name="Corton C."/>
            <person name="Cronin A."/>
            <person name="Doggett J."/>
            <person name="Dowd L."/>
            <person name="Feltwell T."/>
            <person name="Hance Z."/>
            <person name="Harris B."/>
            <person name="Hauser H."/>
            <person name="Holroyd S."/>
            <person name="Jagels K."/>
            <person name="James K.D."/>
            <person name="Lennard N."/>
            <person name="Line A."/>
            <person name="Mayes R."/>
            <person name="Moule S."/>
            <person name="Mungall K."/>
            <person name="Ormond D."/>
            <person name="Quail M.A."/>
            <person name="Rabbinowitsch E."/>
            <person name="Rutherford K.M."/>
            <person name="Sanders M."/>
            <person name="Sharp S."/>
            <person name="Simmonds M."/>
            <person name="Stevens K."/>
            <person name="Whitehead S."/>
            <person name="Barrell B.G."/>
            <person name="Spratt B.G."/>
            <person name="Parkhill J."/>
        </authorList>
    </citation>
    <scope>NUCLEOTIDE SEQUENCE [LARGE SCALE GENOMIC DNA]</scope>
    <source>
        <strain>MSSA476</strain>
    </source>
</reference>
<protein>
    <recommendedName>
        <fullName evidence="1">Homoserine kinase</fullName>
        <shortName evidence="1">HK</shortName>
        <shortName evidence="1">HSK</shortName>
        <ecNumber evidence="1">2.7.1.39</ecNumber>
    </recommendedName>
</protein>
<comment type="function">
    <text evidence="1">Catalyzes the ATP-dependent phosphorylation of L-homoserine to L-homoserine phosphate.</text>
</comment>
<comment type="catalytic activity">
    <reaction evidence="1">
        <text>L-homoserine + ATP = O-phospho-L-homoserine + ADP + H(+)</text>
        <dbReference type="Rhea" id="RHEA:13985"/>
        <dbReference type="ChEBI" id="CHEBI:15378"/>
        <dbReference type="ChEBI" id="CHEBI:30616"/>
        <dbReference type="ChEBI" id="CHEBI:57476"/>
        <dbReference type="ChEBI" id="CHEBI:57590"/>
        <dbReference type="ChEBI" id="CHEBI:456216"/>
        <dbReference type="EC" id="2.7.1.39"/>
    </reaction>
</comment>
<comment type="pathway">
    <text evidence="1">Amino-acid biosynthesis; L-threonine biosynthesis; L-threonine from L-aspartate: step 4/5.</text>
</comment>
<comment type="subcellular location">
    <subcellularLocation>
        <location evidence="1">Cytoplasm</location>
    </subcellularLocation>
</comment>
<comment type="similarity">
    <text evidence="1">Belongs to the GHMP kinase family. Homoserine kinase subfamily.</text>
</comment>
<dbReference type="EC" id="2.7.1.39" evidence="1"/>
<dbReference type="EMBL" id="BX571857">
    <property type="protein sequence ID" value="CAG43048.1"/>
    <property type="molecule type" value="Genomic_DNA"/>
</dbReference>
<dbReference type="RefSeq" id="WP_000073182.1">
    <property type="nucleotide sequence ID" value="NC_002953.3"/>
</dbReference>
<dbReference type="SMR" id="Q6G9M8"/>
<dbReference type="KEGG" id="sas:SAS1270"/>
<dbReference type="HOGENOM" id="CLU_041243_0_0_9"/>
<dbReference type="UniPathway" id="UPA00050">
    <property type="reaction ID" value="UER00064"/>
</dbReference>
<dbReference type="GO" id="GO:0005737">
    <property type="term" value="C:cytoplasm"/>
    <property type="evidence" value="ECO:0007669"/>
    <property type="project" value="UniProtKB-SubCell"/>
</dbReference>
<dbReference type="GO" id="GO:0005524">
    <property type="term" value="F:ATP binding"/>
    <property type="evidence" value="ECO:0007669"/>
    <property type="project" value="UniProtKB-UniRule"/>
</dbReference>
<dbReference type="GO" id="GO:0004413">
    <property type="term" value="F:homoserine kinase activity"/>
    <property type="evidence" value="ECO:0007669"/>
    <property type="project" value="UniProtKB-UniRule"/>
</dbReference>
<dbReference type="GO" id="GO:0009088">
    <property type="term" value="P:threonine biosynthetic process"/>
    <property type="evidence" value="ECO:0007669"/>
    <property type="project" value="UniProtKB-UniRule"/>
</dbReference>
<dbReference type="Gene3D" id="3.30.230.10">
    <property type="match status" value="1"/>
</dbReference>
<dbReference type="Gene3D" id="3.30.70.890">
    <property type="entry name" value="GHMP kinase, C-terminal domain"/>
    <property type="match status" value="1"/>
</dbReference>
<dbReference type="HAMAP" id="MF_00384">
    <property type="entry name" value="Homoser_kinase"/>
    <property type="match status" value="1"/>
</dbReference>
<dbReference type="InterPro" id="IPR013750">
    <property type="entry name" value="GHMP_kinase_C_dom"/>
</dbReference>
<dbReference type="InterPro" id="IPR036554">
    <property type="entry name" value="GHMP_kinase_C_sf"/>
</dbReference>
<dbReference type="InterPro" id="IPR006204">
    <property type="entry name" value="GHMP_kinase_N_dom"/>
</dbReference>
<dbReference type="InterPro" id="IPR006203">
    <property type="entry name" value="GHMP_knse_ATP-bd_CS"/>
</dbReference>
<dbReference type="InterPro" id="IPR000870">
    <property type="entry name" value="Homoserine_kinase"/>
</dbReference>
<dbReference type="InterPro" id="IPR020568">
    <property type="entry name" value="Ribosomal_Su5_D2-typ_SF"/>
</dbReference>
<dbReference type="InterPro" id="IPR014721">
    <property type="entry name" value="Ribsml_uS5_D2-typ_fold_subgr"/>
</dbReference>
<dbReference type="NCBIfam" id="TIGR00191">
    <property type="entry name" value="thrB"/>
    <property type="match status" value="1"/>
</dbReference>
<dbReference type="PANTHER" id="PTHR20861:SF1">
    <property type="entry name" value="HOMOSERINE KINASE"/>
    <property type="match status" value="1"/>
</dbReference>
<dbReference type="PANTHER" id="PTHR20861">
    <property type="entry name" value="HOMOSERINE/4-DIPHOSPHOCYTIDYL-2-C-METHYL-D-ERYTHRITOL KINASE"/>
    <property type="match status" value="1"/>
</dbReference>
<dbReference type="Pfam" id="PF08544">
    <property type="entry name" value="GHMP_kinases_C"/>
    <property type="match status" value="1"/>
</dbReference>
<dbReference type="Pfam" id="PF00288">
    <property type="entry name" value="GHMP_kinases_N"/>
    <property type="match status" value="1"/>
</dbReference>
<dbReference type="PIRSF" id="PIRSF000676">
    <property type="entry name" value="Homoser_kin"/>
    <property type="match status" value="1"/>
</dbReference>
<dbReference type="PRINTS" id="PR00958">
    <property type="entry name" value="HOMSERKINASE"/>
</dbReference>
<dbReference type="SUPFAM" id="SSF55060">
    <property type="entry name" value="GHMP Kinase, C-terminal domain"/>
    <property type="match status" value="1"/>
</dbReference>
<dbReference type="SUPFAM" id="SSF54211">
    <property type="entry name" value="Ribosomal protein S5 domain 2-like"/>
    <property type="match status" value="1"/>
</dbReference>
<dbReference type="PROSITE" id="PS00627">
    <property type="entry name" value="GHMP_KINASES_ATP"/>
    <property type="match status" value="1"/>
</dbReference>
<evidence type="ECO:0000255" key="1">
    <source>
        <dbReference type="HAMAP-Rule" id="MF_00384"/>
    </source>
</evidence>